<comment type="function">
    <text evidence="1">Catalyzes the ATP- as well as the pyrophosphate-dependent phosphorylation of a specific serine residue in HPr, a phosphocarrier protein of the phosphoenolpyruvate-dependent sugar phosphotransferase system (PTS). HprK/P also catalyzes the pyrophosphate-producing, inorganic phosphate-dependent dephosphorylation (phosphorolysis) of seryl-phosphorylated HPr (P-Ser-HPr).</text>
</comment>
<comment type="catalytic activity">
    <reaction evidence="1">
        <text>[HPr protein]-L-serine + ATP = [HPr protein]-O-phospho-L-serine + ADP + H(+)</text>
        <dbReference type="Rhea" id="RHEA:46600"/>
        <dbReference type="Rhea" id="RHEA-COMP:11602"/>
        <dbReference type="Rhea" id="RHEA-COMP:11603"/>
        <dbReference type="ChEBI" id="CHEBI:15378"/>
        <dbReference type="ChEBI" id="CHEBI:29999"/>
        <dbReference type="ChEBI" id="CHEBI:30616"/>
        <dbReference type="ChEBI" id="CHEBI:83421"/>
        <dbReference type="ChEBI" id="CHEBI:456216"/>
    </reaction>
</comment>
<comment type="catalytic activity">
    <reaction evidence="1">
        <text>[HPr protein]-O-phospho-L-serine + phosphate + H(+) = [HPr protein]-L-serine + diphosphate</text>
        <dbReference type="Rhea" id="RHEA:46604"/>
        <dbReference type="Rhea" id="RHEA-COMP:11602"/>
        <dbReference type="Rhea" id="RHEA-COMP:11603"/>
        <dbReference type="ChEBI" id="CHEBI:15378"/>
        <dbReference type="ChEBI" id="CHEBI:29999"/>
        <dbReference type="ChEBI" id="CHEBI:33019"/>
        <dbReference type="ChEBI" id="CHEBI:43474"/>
        <dbReference type="ChEBI" id="CHEBI:83421"/>
    </reaction>
</comment>
<comment type="cofactor">
    <cofactor evidence="1">
        <name>Mg(2+)</name>
        <dbReference type="ChEBI" id="CHEBI:18420"/>
    </cofactor>
</comment>
<comment type="subunit">
    <text evidence="1">Homohexamer.</text>
</comment>
<comment type="domain">
    <text evidence="1">The Walker A ATP-binding motif also binds Pi and PPi.</text>
</comment>
<comment type="miscellaneous">
    <text evidence="1">Both phosphorylation and phosphorolysis are carried out by the same active site and suggest a common mechanism for both reactions.</text>
</comment>
<comment type="similarity">
    <text evidence="1">Belongs to the HPrK/P family.</text>
</comment>
<evidence type="ECO:0000255" key="1">
    <source>
        <dbReference type="HAMAP-Rule" id="MF_01249"/>
    </source>
</evidence>
<dbReference type="EC" id="2.7.11.-" evidence="1"/>
<dbReference type="EC" id="2.7.4.-" evidence="1"/>
<dbReference type="EMBL" id="CP001100">
    <property type="protein sequence ID" value="ACF13536.1"/>
    <property type="molecule type" value="Genomic_DNA"/>
</dbReference>
<dbReference type="RefSeq" id="WP_012499620.1">
    <property type="nucleotide sequence ID" value="NC_011026.1"/>
</dbReference>
<dbReference type="SMR" id="B3QY08"/>
<dbReference type="STRING" id="517418.Ctha_1072"/>
<dbReference type="KEGG" id="cts:Ctha_1072"/>
<dbReference type="eggNOG" id="COG1493">
    <property type="taxonomic scope" value="Bacteria"/>
</dbReference>
<dbReference type="HOGENOM" id="CLU_052030_0_1_10"/>
<dbReference type="OrthoDB" id="9778803at2"/>
<dbReference type="Proteomes" id="UP000001208">
    <property type="component" value="Chromosome"/>
</dbReference>
<dbReference type="GO" id="GO:0005524">
    <property type="term" value="F:ATP binding"/>
    <property type="evidence" value="ECO:0007669"/>
    <property type="project" value="UniProtKB-UniRule"/>
</dbReference>
<dbReference type="GO" id="GO:0000287">
    <property type="term" value="F:magnesium ion binding"/>
    <property type="evidence" value="ECO:0007669"/>
    <property type="project" value="UniProtKB-UniRule"/>
</dbReference>
<dbReference type="GO" id="GO:0000155">
    <property type="term" value="F:phosphorelay sensor kinase activity"/>
    <property type="evidence" value="ECO:0007669"/>
    <property type="project" value="InterPro"/>
</dbReference>
<dbReference type="GO" id="GO:0004674">
    <property type="term" value="F:protein serine/threonine kinase activity"/>
    <property type="evidence" value="ECO:0007669"/>
    <property type="project" value="UniProtKB-KW"/>
</dbReference>
<dbReference type="GO" id="GO:0004712">
    <property type="term" value="F:protein serine/threonine/tyrosine kinase activity"/>
    <property type="evidence" value="ECO:0007669"/>
    <property type="project" value="UniProtKB-UniRule"/>
</dbReference>
<dbReference type="GO" id="GO:0006109">
    <property type="term" value="P:regulation of carbohydrate metabolic process"/>
    <property type="evidence" value="ECO:0007669"/>
    <property type="project" value="UniProtKB-UniRule"/>
</dbReference>
<dbReference type="CDD" id="cd01918">
    <property type="entry name" value="HprK_C"/>
    <property type="match status" value="1"/>
</dbReference>
<dbReference type="FunFam" id="3.40.50.300:FF:000174">
    <property type="entry name" value="HPr kinase/phosphorylase"/>
    <property type="match status" value="1"/>
</dbReference>
<dbReference type="Gene3D" id="3.40.1390.20">
    <property type="entry name" value="HprK N-terminal domain-like"/>
    <property type="match status" value="1"/>
</dbReference>
<dbReference type="Gene3D" id="3.40.50.300">
    <property type="entry name" value="P-loop containing nucleotide triphosphate hydrolases"/>
    <property type="match status" value="1"/>
</dbReference>
<dbReference type="HAMAP" id="MF_01249">
    <property type="entry name" value="HPr_kinase"/>
    <property type="match status" value="1"/>
</dbReference>
<dbReference type="InterPro" id="IPR003755">
    <property type="entry name" value="HPr(Ser)_kin/Pase"/>
</dbReference>
<dbReference type="InterPro" id="IPR011104">
    <property type="entry name" value="Hpr_kin/Pase_C"/>
</dbReference>
<dbReference type="InterPro" id="IPR011126">
    <property type="entry name" value="Hpr_kin/Pase_Hpr_N"/>
</dbReference>
<dbReference type="InterPro" id="IPR027417">
    <property type="entry name" value="P-loop_NTPase"/>
</dbReference>
<dbReference type="InterPro" id="IPR028979">
    <property type="entry name" value="Ser_kin/Pase_Hpr-like_N_sf"/>
</dbReference>
<dbReference type="NCBIfam" id="TIGR00679">
    <property type="entry name" value="hpr-ser"/>
    <property type="match status" value="1"/>
</dbReference>
<dbReference type="PANTHER" id="PTHR30305:SF1">
    <property type="entry name" value="HPR KINASE_PHOSPHORYLASE"/>
    <property type="match status" value="1"/>
</dbReference>
<dbReference type="PANTHER" id="PTHR30305">
    <property type="entry name" value="PROTEIN YJDM-RELATED"/>
    <property type="match status" value="1"/>
</dbReference>
<dbReference type="Pfam" id="PF07475">
    <property type="entry name" value="Hpr_kinase_C"/>
    <property type="match status" value="1"/>
</dbReference>
<dbReference type="Pfam" id="PF02603">
    <property type="entry name" value="Hpr_kinase_N"/>
    <property type="match status" value="1"/>
</dbReference>
<dbReference type="SUPFAM" id="SSF75138">
    <property type="entry name" value="HprK N-terminal domain-like"/>
    <property type="match status" value="1"/>
</dbReference>
<dbReference type="SUPFAM" id="SSF53795">
    <property type="entry name" value="PEP carboxykinase-like"/>
    <property type="match status" value="1"/>
</dbReference>
<feature type="chain" id="PRO_1000139896" description="HPr kinase/phosphorylase">
    <location>
        <begin position="1"/>
        <end position="340"/>
    </location>
</feature>
<feature type="region of interest" description="Important for the catalytic mechanism of both phosphorylation and dephosphorylation" evidence="1">
    <location>
        <begin position="216"/>
        <end position="225"/>
    </location>
</feature>
<feature type="region of interest" description="Important for the catalytic mechanism of dephosphorylation" evidence="1">
    <location>
        <begin position="279"/>
        <end position="284"/>
    </location>
</feature>
<feature type="active site" evidence="1">
    <location>
        <position position="153"/>
    </location>
</feature>
<feature type="active site" evidence="1">
    <location>
        <position position="174"/>
    </location>
</feature>
<feature type="active site" description="Proton acceptor; for phosphorylation activity. Proton donor; for dephosphorylation activity" evidence="1">
    <location>
        <position position="192"/>
    </location>
</feature>
<feature type="active site" evidence="1">
    <location>
        <position position="258"/>
    </location>
</feature>
<feature type="binding site" evidence="1">
    <location>
        <begin position="168"/>
        <end position="175"/>
    </location>
    <ligand>
        <name>ATP</name>
        <dbReference type="ChEBI" id="CHEBI:30616"/>
    </ligand>
</feature>
<feature type="binding site" evidence="1">
    <location>
        <position position="175"/>
    </location>
    <ligand>
        <name>Mg(2+)</name>
        <dbReference type="ChEBI" id="CHEBI:18420"/>
    </ligand>
</feature>
<feature type="binding site" evidence="1">
    <location>
        <position position="217"/>
    </location>
    <ligand>
        <name>Mg(2+)</name>
        <dbReference type="ChEBI" id="CHEBI:18420"/>
    </ligand>
</feature>
<organism>
    <name type="scientific">Chloroherpeton thalassium (strain ATCC 35110 / GB-78)</name>
    <dbReference type="NCBI Taxonomy" id="517418"/>
    <lineage>
        <taxon>Bacteria</taxon>
        <taxon>Pseudomonadati</taxon>
        <taxon>Chlorobiota</taxon>
        <taxon>Chlorobiia</taxon>
        <taxon>Chlorobiales</taxon>
        <taxon>Chloroherpetonaceae</taxon>
        <taxon>Chloroherpeton</taxon>
    </lineage>
</organism>
<name>HPRK_CHLT3</name>
<reference key="1">
    <citation type="submission" date="2008-06" db="EMBL/GenBank/DDBJ databases">
        <title>Complete sequence of Chloroherpeton thalassium ATCC 35110.</title>
        <authorList>
            <consortium name="US DOE Joint Genome Institute"/>
            <person name="Lucas S."/>
            <person name="Copeland A."/>
            <person name="Lapidus A."/>
            <person name="Glavina del Rio T."/>
            <person name="Dalin E."/>
            <person name="Tice H."/>
            <person name="Bruce D."/>
            <person name="Goodwin L."/>
            <person name="Pitluck S."/>
            <person name="Schmutz J."/>
            <person name="Larimer F."/>
            <person name="Land M."/>
            <person name="Hauser L."/>
            <person name="Kyrpides N."/>
            <person name="Mikhailova N."/>
            <person name="Liu Z."/>
            <person name="Li T."/>
            <person name="Zhao F."/>
            <person name="Overmann J."/>
            <person name="Bryant D.A."/>
            <person name="Richardson P."/>
        </authorList>
    </citation>
    <scope>NUCLEOTIDE SEQUENCE [LARGE SCALE GENOMIC DNA]</scope>
    <source>
        <strain>ATCC 35110 / GB-78</strain>
    </source>
</reference>
<proteinExistence type="inferred from homology"/>
<protein>
    <recommendedName>
        <fullName evidence="1">HPr kinase/phosphorylase</fullName>
        <shortName evidence="1">HPrK/P</shortName>
        <ecNumber evidence="1">2.7.11.-</ecNumber>
        <ecNumber evidence="1">2.7.4.-</ecNumber>
    </recommendedName>
    <alternativeName>
        <fullName evidence="1">HPr(Ser) kinase/phosphorylase</fullName>
    </alternativeName>
</protein>
<sequence length="340" mass="39147">MDFKKKPIKKKSITVAYFYEHLSSRLSIKLKKLNQVDEEKRKIYERDIHRPGLALAGFTNLFTYRRVQVFGNTETWFLNHLGTEERKQAFSNITRYKVPCIIVTNNNKLDPELVEMATEAGIPLYRTSHTTTKFIYLITDFLDDQFCHYQHYHGSMVDVYGVGMFITGRSGIGKSEVALDLIERGHRLVADDLVVITRKGESVLMASGTELVRHFMEIRGLGIIDVEAMFGIRAIRHQKRVEIVVELLEFEPGKEFDRTGLENKSVDILGVEVPLVQLPIYPGKNITVIAEVVALNYLLKHYGYDAAEEFDRRIQQQIATRATVNNPAQRAVEYFEHDFE</sequence>
<accession>B3QY08</accession>
<gene>
    <name evidence="1" type="primary">hprK</name>
    <name type="ordered locus">Ctha_1072</name>
</gene>
<keyword id="KW-0067">ATP-binding</keyword>
<keyword id="KW-0418">Kinase</keyword>
<keyword id="KW-0460">Magnesium</keyword>
<keyword id="KW-0479">Metal-binding</keyword>
<keyword id="KW-0511">Multifunctional enzyme</keyword>
<keyword id="KW-0547">Nucleotide-binding</keyword>
<keyword id="KW-1185">Reference proteome</keyword>
<keyword id="KW-0723">Serine/threonine-protein kinase</keyword>
<keyword id="KW-0808">Transferase</keyword>